<sequence length="252" mass="27984">MERVLIVNADDFGLSKGQNYGIVEAYRNGVVTSTTALVNGEAIDHAAQLSRELPALGVGMHFVLTLGKPVSEMPGLTRDGLLGKWIWQMAEEDTLPLDEIAHELACQYQRFIDVFGREPTHLDSHHHVHMFPQIFPIVALFAAQRGIALRIDRQTVLNADDLPSDLRSTQGFSSEFYGEEITEACFLRILDASAHRGEASLEVMCHPAFVDNIIRQSAYCYPRLTELEVLTSASLKAAIAERGYRPGSFLDI</sequence>
<comment type="function">
    <text evidence="1">Involved in the degradation of chitin. ChbG is essential for growth on the acetylated chitooligosaccharides chitobiose and chitotriose but is dispensable for growth on cellobiose and chitosan dimer, the deacetylated form of chitobiose. Deacetylation of chitobiose-6-P and chitotriose-6-P is necessary for both the activation of the chb promoter by the regulatory protein ChbR and the hydrolysis of phosphorylated beta-glucosides by the phospho-beta-glucosidase ChbF. Catalyzes the removal of only one acetyl group from chitobiose-6-P to yield monoacetylchitobiose-6-P, the inducer of ChbR and the substrate of ChbF.</text>
</comment>
<comment type="catalytic activity">
    <reaction evidence="1">
        <text>N,N'-diacetylchitobiose + H2O = N-acetyl-beta-D-glucosaminyl-(1-&gt;4)-D-glucosamine + acetate</text>
        <dbReference type="Rhea" id="RHEA:27469"/>
        <dbReference type="ChEBI" id="CHEBI:15377"/>
        <dbReference type="ChEBI" id="CHEBI:28681"/>
        <dbReference type="ChEBI" id="CHEBI:30089"/>
        <dbReference type="ChEBI" id="CHEBI:59910"/>
        <dbReference type="EC" id="3.5.1.105"/>
    </reaction>
</comment>
<comment type="catalytic activity">
    <reaction evidence="1">
        <text>diacetylchitobiose-6'-phosphate + H2O = N'-monoacetylchitobiose-6'-phosphate + acetate</text>
        <dbReference type="Rhea" id="RHEA:35083"/>
        <dbReference type="ChEBI" id="CHEBI:15377"/>
        <dbReference type="ChEBI" id="CHEBI:30089"/>
        <dbReference type="ChEBI" id="CHEBI:64883"/>
        <dbReference type="ChEBI" id="CHEBI:71315"/>
    </reaction>
</comment>
<comment type="cofactor">
    <cofactor evidence="1">
        <name>Mg(2+)</name>
        <dbReference type="ChEBI" id="CHEBI:18420"/>
    </cofactor>
</comment>
<comment type="pathway">
    <text evidence="1">Glycan degradation; chitin degradation.</text>
</comment>
<comment type="subunit">
    <text evidence="1">Homodimer.</text>
</comment>
<comment type="subcellular location">
    <subcellularLocation>
        <location evidence="1">Cytoplasm</location>
    </subcellularLocation>
</comment>
<comment type="similarity">
    <text evidence="1">Belongs to the YdjC deacetylase family. ChbG subfamily.</text>
</comment>
<proteinExistence type="inferred from homology"/>
<accession>B4TGF6</accession>
<reference key="1">
    <citation type="journal article" date="2011" name="J. Bacteriol.">
        <title>Comparative genomics of 28 Salmonella enterica isolates: evidence for CRISPR-mediated adaptive sublineage evolution.</title>
        <authorList>
            <person name="Fricke W.F."/>
            <person name="Mammel M.K."/>
            <person name="McDermott P.F."/>
            <person name="Tartera C."/>
            <person name="White D.G."/>
            <person name="Leclerc J.E."/>
            <person name="Ravel J."/>
            <person name="Cebula T.A."/>
        </authorList>
    </citation>
    <scope>NUCLEOTIDE SEQUENCE [LARGE SCALE GENOMIC DNA]</scope>
    <source>
        <strain>SL476</strain>
    </source>
</reference>
<gene>
    <name evidence="1" type="primary">chbG</name>
    <name type="ordered locus">SeHA_C1446</name>
</gene>
<feature type="chain" id="PRO_1000139834" description="Chitooligosaccharide deacetylase">
    <location>
        <begin position="1"/>
        <end position="252"/>
    </location>
</feature>
<feature type="binding site" evidence="1">
    <location>
        <position position="61"/>
    </location>
    <ligand>
        <name>Mg(2+)</name>
        <dbReference type="ChEBI" id="CHEBI:18420"/>
    </ligand>
</feature>
<feature type="binding site" evidence="1">
    <location>
        <position position="125"/>
    </location>
    <ligand>
        <name>Mg(2+)</name>
        <dbReference type="ChEBI" id="CHEBI:18420"/>
    </ligand>
</feature>
<protein>
    <recommendedName>
        <fullName evidence="1">Chitooligosaccharide deacetylase</fullName>
        <shortName evidence="1">COD</shortName>
        <ecNumber evidence="1">3.5.1.105</ecNumber>
    </recommendedName>
    <alternativeName>
        <fullName evidence="1">Chitin disaccharide deacetylase</fullName>
    </alternativeName>
    <alternativeName>
        <fullName evidence="1">Chitobiose deacetylase</fullName>
    </alternativeName>
    <alternativeName>
        <fullName evidence="1">Chitobiose-6P deacetylase</fullName>
    </alternativeName>
    <alternativeName>
        <fullName evidence="1">Chitotriose deacetylase</fullName>
    </alternativeName>
    <alternativeName>
        <fullName evidence="1">Chitotriose-6P deacetylase</fullName>
    </alternativeName>
</protein>
<name>CHBG_SALHS</name>
<keyword id="KW-0119">Carbohydrate metabolism</keyword>
<keyword id="KW-0146">Chitin degradation</keyword>
<keyword id="KW-0963">Cytoplasm</keyword>
<keyword id="KW-0378">Hydrolase</keyword>
<keyword id="KW-0460">Magnesium</keyword>
<keyword id="KW-0479">Metal-binding</keyword>
<keyword id="KW-0624">Polysaccharide degradation</keyword>
<evidence type="ECO:0000255" key="1">
    <source>
        <dbReference type="HAMAP-Rule" id="MF_01246"/>
    </source>
</evidence>
<dbReference type="EC" id="3.5.1.105" evidence="1"/>
<dbReference type="EMBL" id="CP001120">
    <property type="protein sequence ID" value="ACF67066.1"/>
    <property type="molecule type" value="Genomic_DNA"/>
</dbReference>
<dbReference type="RefSeq" id="WP_000442728.1">
    <property type="nucleotide sequence ID" value="NC_011083.1"/>
</dbReference>
<dbReference type="SMR" id="B4TGF6"/>
<dbReference type="KEGG" id="seh:SeHA_C1446"/>
<dbReference type="HOGENOM" id="CLU_064244_4_1_6"/>
<dbReference type="UniPathway" id="UPA00349"/>
<dbReference type="Proteomes" id="UP000001866">
    <property type="component" value="Chromosome"/>
</dbReference>
<dbReference type="GO" id="GO:0005737">
    <property type="term" value="C:cytoplasm"/>
    <property type="evidence" value="ECO:0007669"/>
    <property type="project" value="UniProtKB-SubCell"/>
</dbReference>
<dbReference type="GO" id="GO:0036311">
    <property type="term" value="F:chitin disaccharide deacetylase activity"/>
    <property type="evidence" value="ECO:0007669"/>
    <property type="project" value="UniProtKB-UniRule"/>
</dbReference>
<dbReference type="GO" id="GO:0019213">
    <property type="term" value="F:deacetylase activity"/>
    <property type="evidence" value="ECO:0007669"/>
    <property type="project" value="TreeGrafter"/>
</dbReference>
<dbReference type="GO" id="GO:0046872">
    <property type="term" value="F:metal ion binding"/>
    <property type="evidence" value="ECO:0007669"/>
    <property type="project" value="UniProtKB-KW"/>
</dbReference>
<dbReference type="GO" id="GO:0006032">
    <property type="term" value="P:chitin catabolic process"/>
    <property type="evidence" value="ECO:0007669"/>
    <property type="project" value="UniProtKB-UniPathway"/>
</dbReference>
<dbReference type="GO" id="GO:0052777">
    <property type="term" value="P:diacetylchitobiose catabolic process"/>
    <property type="evidence" value="ECO:0007669"/>
    <property type="project" value="UniProtKB-UniRule"/>
</dbReference>
<dbReference type="GO" id="GO:0000272">
    <property type="term" value="P:polysaccharide catabolic process"/>
    <property type="evidence" value="ECO:0007669"/>
    <property type="project" value="UniProtKB-UniRule"/>
</dbReference>
<dbReference type="CDD" id="cd10803">
    <property type="entry name" value="YdjC_EF3048_like"/>
    <property type="match status" value="1"/>
</dbReference>
<dbReference type="FunFam" id="3.20.20.370:FF:000001">
    <property type="entry name" value="Chitooligosaccharide deacetylase"/>
    <property type="match status" value="1"/>
</dbReference>
<dbReference type="Gene3D" id="3.20.20.370">
    <property type="entry name" value="Glycoside hydrolase/deacetylase"/>
    <property type="match status" value="1"/>
</dbReference>
<dbReference type="HAMAP" id="MF_01246">
    <property type="entry name" value="COD"/>
    <property type="match status" value="1"/>
</dbReference>
<dbReference type="InterPro" id="IPR022948">
    <property type="entry name" value="COD_ChbG_bac"/>
</dbReference>
<dbReference type="InterPro" id="IPR011330">
    <property type="entry name" value="Glyco_hydro/deAcase_b/a-brl"/>
</dbReference>
<dbReference type="InterPro" id="IPR006879">
    <property type="entry name" value="YdjC-like"/>
</dbReference>
<dbReference type="NCBIfam" id="NF002559">
    <property type="entry name" value="PRK02134.1"/>
    <property type="match status" value="1"/>
</dbReference>
<dbReference type="PANTHER" id="PTHR31609:SF1">
    <property type="entry name" value="CARBOHYDRATE DEACETYLASE"/>
    <property type="match status" value="1"/>
</dbReference>
<dbReference type="PANTHER" id="PTHR31609">
    <property type="entry name" value="YDJC DEACETYLASE FAMILY MEMBER"/>
    <property type="match status" value="1"/>
</dbReference>
<dbReference type="Pfam" id="PF04794">
    <property type="entry name" value="YdjC"/>
    <property type="match status" value="1"/>
</dbReference>
<dbReference type="SUPFAM" id="SSF88713">
    <property type="entry name" value="Glycoside hydrolase/deacetylase"/>
    <property type="match status" value="1"/>
</dbReference>
<organism>
    <name type="scientific">Salmonella heidelberg (strain SL476)</name>
    <dbReference type="NCBI Taxonomy" id="454169"/>
    <lineage>
        <taxon>Bacteria</taxon>
        <taxon>Pseudomonadati</taxon>
        <taxon>Pseudomonadota</taxon>
        <taxon>Gammaproteobacteria</taxon>
        <taxon>Enterobacterales</taxon>
        <taxon>Enterobacteriaceae</taxon>
        <taxon>Salmonella</taxon>
    </lineage>
</organism>